<accession>Q6C331</accession>
<name>TIM16_YARLI</name>
<evidence type="ECO:0000250" key="1"/>
<evidence type="ECO:0000256" key="2">
    <source>
        <dbReference type="SAM" id="MobiDB-lite"/>
    </source>
</evidence>
<evidence type="ECO:0000305" key="3"/>
<proteinExistence type="inferred from homology"/>
<sequence>MAHRLIYQVVVTGTQVFAKAFTQAYKQAATAQAASKTSKSAASKFGGLQLDEACKILDVDETALDKVVAELNKKHKLEDIAESESVLAQIDKKFTHLYTVNSEHKSGSFYLQSKVYRAMERIRGELELDPLPKPEIEEPKKKEEEKK</sequence>
<organism>
    <name type="scientific">Yarrowia lipolytica (strain CLIB 122 / E 150)</name>
    <name type="common">Yeast</name>
    <name type="synonym">Candida lipolytica</name>
    <dbReference type="NCBI Taxonomy" id="284591"/>
    <lineage>
        <taxon>Eukaryota</taxon>
        <taxon>Fungi</taxon>
        <taxon>Dikarya</taxon>
        <taxon>Ascomycota</taxon>
        <taxon>Saccharomycotina</taxon>
        <taxon>Dipodascomycetes</taxon>
        <taxon>Dipodascales</taxon>
        <taxon>Dipodascales incertae sedis</taxon>
        <taxon>Yarrowia</taxon>
    </lineage>
</organism>
<protein>
    <recommendedName>
        <fullName>Mitochondrial import inner membrane translocase subunit TIM16</fullName>
    </recommendedName>
    <alternativeName>
        <fullName>Presequence translocated-associated motor subunit PAM16</fullName>
    </alternativeName>
</protein>
<keyword id="KW-0472">Membrane</keyword>
<keyword id="KW-0496">Mitochondrion</keyword>
<keyword id="KW-0999">Mitochondrion inner membrane</keyword>
<keyword id="KW-0653">Protein transport</keyword>
<keyword id="KW-1185">Reference proteome</keyword>
<keyword id="KW-0811">Translocation</keyword>
<keyword id="KW-0813">Transport</keyword>
<dbReference type="EMBL" id="CR382132">
    <property type="protein sequence ID" value="CAG77736.1"/>
    <property type="molecule type" value="Genomic_DNA"/>
</dbReference>
<dbReference type="RefSeq" id="XP_504931.1">
    <property type="nucleotide sequence ID" value="XM_504931.1"/>
</dbReference>
<dbReference type="SMR" id="Q6C331"/>
<dbReference type="FunCoup" id="Q6C331">
    <property type="interactions" value="252"/>
</dbReference>
<dbReference type="STRING" id="284591.Q6C331"/>
<dbReference type="EnsemblFungi" id="CAG77736">
    <property type="protein sequence ID" value="CAG77736"/>
    <property type="gene ID" value="YALI0_F03047g"/>
</dbReference>
<dbReference type="KEGG" id="yli:2907756"/>
<dbReference type="VEuPathDB" id="FungiDB:YALI0_F03047g"/>
<dbReference type="HOGENOM" id="CLU_101461_0_1_1"/>
<dbReference type="InParanoid" id="Q6C331"/>
<dbReference type="OMA" id="RMFKIND"/>
<dbReference type="OrthoDB" id="94257at4891"/>
<dbReference type="Proteomes" id="UP000001300">
    <property type="component" value="Chromosome F"/>
</dbReference>
<dbReference type="GO" id="GO:0001405">
    <property type="term" value="C:PAM complex, Tim23 associated import motor"/>
    <property type="evidence" value="ECO:0007669"/>
    <property type="project" value="EnsemblFungi"/>
</dbReference>
<dbReference type="GO" id="GO:0005744">
    <property type="term" value="C:TIM23 mitochondrial import inner membrane translocase complex"/>
    <property type="evidence" value="ECO:0000318"/>
    <property type="project" value="GO_Central"/>
</dbReference>
<dbReference type="GO" id="GO:0019904">
    <property type="term" value="F:protein domain specific binding"/>
    <property type="evidence" value="ECO:0007669"/>
    <property type="project" value="EnsemblFungi"/>
</dbReference>
<dbReference type="GO" id="GO:0030150">
    <property type="term" value="P:protein import into mitochondrial matrix"/>
    <property type="evidence" value="ECO:0000318"/>
    <property type="project" value="GO_Central"/>
</dbReference>
<dbReference type="Gene3D" id="1.10.287.110">
    <property type="entry name" value="DnaJ domain"/>
    <property type="match status" value="1"/>
</dbReference>
<dbReference type="InterPro" id="IPR036869">
    <property type="entry name" value="J_dom_sf"/>
</dbReference>
<dbReference type="InterPro" id="IPR005341">
    <property type="entry name" value="Tim16"/>
</dbReference>
<dbReference type="PANTHER" id="PTHR12388">
    <property type="entry name" value="MITOCHONDRIA ASSOCIATED GRANULOCYTE MACROPHAGE CSF SIGNALING MOLECULE"/>
    <property type="match status" value="1"/>
</dbReference>
<dbReference type="PANTHER" id="PTHR12388:SF0">
    <property type="entry name" value="MITOCHONDRIAL IMPORT INNER MEMBRANE TRANSLOCASE SUBUNIT TIM16"/>
    <property type="match status" value="1"/>
</dbReference>
<dbReference type="Pfam" id="PF03656">
    <property type="entry name" value="Pam16"/>
    <property type="match status" value="1"/>
</dbReference>
<comment type="function">
    <text evidence="1">Essential component of the PAM complex, a complex required for the translocation of transit peptide-containing proteins from the inner membrane into the mitochondrial matrix in an ATP-dependent manner. In the complex, it is required to regulate activity of mtHSP70 (SSC1) via its interaction with PAM18/TIM14. May act by positioning PAM18/TIM14 in juxtaposition to mtHSP70 at the translocon to maximize ATPase stimulation (By similarity).</text>
</comment>
<comment type="subunit">
    <text evidence="1">Heterodimer with PAM18. Component of the PAM complex, at least composed of mtHsp70, MGE1, TIM44, PAM16, PAM17 and PAM18 (By similarity).</text>
</comment>
<comment type="subcellular location">
    <subcellularLocation>
        <location evidence="1">Mitochondrion inner membrane</location>
        <topology evidence="1">Peripheral membrane protein</topology>
    </subcellularLocation>
</comment>
<comment type="domain">
    <text evidence="1">The J-like region, although related to the J domain does not stimulate ATPase activity of mtHSP70. It nevertheless mediates the heterodimerization with the J domain of PAM18 and is therefore essential for PAM complex function (By similarity).</text>
</comment>
<comment type="similarity">
    <text evidence="3">Belongs to the TIM16/PAM16 family.</text>
</comment>
<feature type="chain" id="PRO_0000214097" description="Mitochondrial import inner membrane translocase subunit TIM16">
    <location>
        <begin position="1"/>
        <end position="147"/>
    </location>
</feature>
<feature type="region of interest" description="J-like">
    <location>
        <begin position="52"/>
        <end position="127"/>
    </location>
</feature>
<feature type="region of interest" description="Disordered" evidence="2">
    <location>
        <begin position="128"/>
        <end position="147"/>
    </location>
</feature>
<gene>
    <name type="primary">PAM16</name>
    <name type="synonym">TIM16</name>
    <name type="ordered locus">YALI0F03047g</name>
</gene>
<reference key="1">
    <citation type="journal article" date="2004" name="Nature">
        <title>Genome evolution in yeasts.</title>
        <authorList>
            <person name="Dujon B."/>
            <person name="Sherman D."/>
            <person name="Fischer G."/>
            <person name="Durrens P."/>
            <person name="Casaregola S."/>
            <person name="Lafontaine I."/>
            <person name="de Montigny J."/>
            <person name="Marck C."/>
            <person name="Neuveglise C."/>
            <person name="Talla E."/>
            <person name="Goffard N."/>
            <person name="Frangeul L."/>
            <person name="Aigle M."/>
            <person name="Anthouard V."/>
            <person name="Babour A."/>
            <person name="Barbe V."/>
            <person name="Barnay S."/>
            <person name="Blanchin S."/>
            <person name="Beckerich J.-M."/>
            <person name="Beyne E."/>
            <person name="Bleykasten C."/>
            <person name="Boisrame A."/>
            <person name="Boyer J."/>
            <person name="Cattolico L."/>
            <person name="Confanioleri F."/>
            <person name="de Daruvar A."/>
            <person name="Despons L."/>
            <person name="Fabre E."/>
            <person name="Fairhead C."/>
            <person name="Ferry-Dumazet H."/>
            <person name="Groppi A."/>
            <person name="Hantraye F."/>
            <person name="Hennequin C."/>
            <person name="Jauniaux N."/>
            <person name="Joyet P."/>
            <person name="Kachouri R."/>
            <person name="Kerrest A."/>
            <person name="Koszul R."/>
            <person name="Lemaire M."/>
            <person name="Lesur I."/>
            <person name="Ma L."/>
            <person name="Muller H."/>
            <person name="Nicaud J.-M."/>
            <person name="Nikolski M."/>
            <person name="Oztas S."/>
            <person name="Ozier-Kalogeropoulos O."/>
            <person name="Pellenz S."/>
            <person name="Potier S."/>
            <person name="Richard G.-F."/>
            <person name="Straub M.-L."/>
            <person name="Suleau A."/>
            <person name="Swennen D."/>
            <person name="Tekaia F."/>
            <person name="Wesolowski-Louvel M."/>
            <person name="Westhof E."/>
            <person name="Wirth B."/>
            <person name="Zeniou-Meyer M."/>
            <person name="Zivanovic Y."/>
            <person name="Bolotin-Fukuhara M."/>
            <person name="Thierry A."/>
            <person name="Bouchier C."/>
            <person name="Caudron B."/>
            <person name="Scarpelli C."/>
            <person name="Gaillardin C."/>
            <person name="Weissenbach J."/>
            <person name="Wincker P."/>
            <person name="Souciet J.-L."/>
        </authorList>
    </citation>
    <scope>NUCLEOTIDE SEQUENCE [LARGE SCALE GENOMIC DNA]</scope>
    <source>
        <strain>CLIB 122 / E 150</strain>
    </source>
</reference>